<comment type="function">
    <text evidence="1">Ligates lysine onto the cytidine present at position 34 of the AUA codon-specific tRNA(Ile) that contains the anticodon CAU, in an ATP-dependent manner. Cytidine is converted to lysidine, thus changing the amino acid specificity of the tRNA from methionine to isoleucine.</text>
</comment>
<comment type="catalytic activity">
    <reaction evidence="1">
        <text>cytidine(34) in tRNA(Ile2) + L-lysine + ATP = lysidine(34) in tRNA(Ile2) + AMP + diphosphate + H(+)</text>
        <dbReference type="Rhea" id="RHEA:43744"/>
        <dbReference type="Rhea" id="RHEA-COMP:10625"/>
        <dbReference type="Rhea" id="RHEA-COMP:10670"/>
        <dbReference type="ChEBI" id="CHEBI:15378"/>
        <dbReference type="ChEBI" id="CHEBI:30616"/>
        <dbReference type="ChEBI" id="CHEBI:32551"/>
        <dbReference type="ChEBI" id="CHEBI:33019"/>
        <dbReference type="ChEBI" id="CHEBI:82748"/>
        <dbReference type="ChEBI" id="CHEBI:83665"/>
        <dbReference type="ChEBI" id="CHEBI:456215"/>
        <dbReference type="EC" id="6.3.4.19"/>
    </reaction>
</comment>
<comment type="subcellular location">
    <subcellularLocation>
        <location evidence="1">Cytoplasm</location>
    </subcellularLocation>
</comment>
<comment type="domain">
    <text>The N-terminal region contains the highly conserved SGGXDS motif, predicted to be a P-loop motif involved in ATP binding.</text>
</comment>
<comment type="similarity">
    <text evidence="1">Belongs to the tRNA(Ile)-lysidine synthase family.</text>
</comment>
<keyword id="KW-0067">ATP-binding</keyword>
<keyword id="KW-0963">Cytoplasm</keyword>
<keyword id="KW-0436">Ligase</keyword>
<keyword id="KW-0547">Nucleotide-binding</keyword>
<keyword id="KW-0819">tRNA processing</keyword>
<dbReference type="EC" id="6.3.4.19" evidence="1"/>
<dbReference type="EMBL" id="AM884177">
    <property type="protein sequence ID" value="CAP06610.1"/>
    <property type="molecule type" value="Genomic_DNA"/>
</dbReference>
<dbReference type="RefSeq" id="WP_009873449.1">
    <property type="nucleotide sequence ID" value="NC_010280.2"/>
</dbReference>
<dbReference type="SMR" id="B0BAU8"/>
<dbReference type="KEGG" id="ctl:CTLon_0212"/>
<dbReference type="HOGENOM" id="CLU_870675_0_0_0"/>
<dbReference type="Proteomes" id="UP001154401">
    <property type="component" value="Chromosome"/>
</dbReference>
<dbReference type="GO" id="GO:0005737">
    <property type="term" value="C:cytoplasm"/>
    <property type="evidence" value="ECO:0007669"/>
    <property type="project" value="UniProtKB-SubCell"/>
</dbReference>
<dbReference type="GO" id="GO:0005524">
    <property type="term" value="F:ATP binding"/>
    <property type="evidence" value="ECO:0007669"/>
    <property type="project" value="UniProtKB-UniRule"/>
</dbReference>
<dbReference type="GO" id="GO:0032267">
    <property type="term" value="F:tRNA(Ile)-lysidine synthase activity"/>
    <property type="evidence" value="ECO:0007669"/>
    <property type="project" value="UniProtKB-EC"/>
</dbReference>
<dbReference type="GO" id="GO:0006400">
    <property type="term" value="P:tRNA modification"/>
    <property type="evidence" value="ECO:0007669"/>
    <property type="project" value="UniProtKB-UniRule"/>
</dbReference>
<dbReference type="CDD" id="cd01992">
    <property type="entry name" value="TilS_N"/>
    <property type="match status" value="1"/>
</dbReference>
<dbReference type="Gene3D" id="3.40.50.620">
    <property type="entry name" value="HUPs"/>
    <property type="match status" value="1"/>
</dbReference>
<dbReference type="HAMAP" id="MF_01161">
    <property type="entry name" value="tRNA_Ile_lys_synt"/>
    <property type="match status" value="1"/>
</dbReference>
<dbReference type="InterPro" id="IPR014729">
    <property type="entry name" value="Rossmann-like_a/b/a_fold"/>
</dbReference>
<dbReference type="InterPro" id="IPR011063">
    <property type="entry name" value="TilS/TtcA_N"/>
</dbReference>
<dbReference type="InterPro" id="IPR012094">
    <property type="entry name" value="tRNA_Ile_lys_synt"/>
</dbReference>
<dbReference type="InterPro" id="IPR012795">
    <property type="entry name" value="tRNA_Ile_lys_synt_N"/>
</dbReference>
<dbReference type="NCBIfam" id="TIGR02432">
    <property type="entry name" value="lysidine_TilS_N"/>
    <property type="match status" value="1"/>
</dbReference>
<dbReference type="PANTHER" id="PTHR43033">
    <property type="entry name" value="TRNA(ILE)-LYSIDINE SYNTHASE-RELATED"/>
    <property type="match status" value="1"/>
</dbReference>
<dbReference type="PANTHER" id="PTHR43033:SF1">
    <property type="entry name" value="TRNA(ILE)-LYSIDINE SYNTHASE-RELATED"/>
    <property type="match status" value="1"/>
</dbReference>
<dbReference type="Pfam" id="PF01171">
    <property type="entry name" value="ATP_bind_3"/>
    <property type="match status" value="1"/>
</dbReference>
<dbReference type="SUPFAM" id="SSF52402">
    <property type="entry name" value="Adenine nucleotide alpha hydrolases-like"/>
    <property type="match status" value="1"/>
</dbReference>
<sequence length="321" mass="37243">MITRLFENDKQLEGFFSSLDKKKKYLLALSGGSDSLFLMYLLKSRAIFFTAVHVDYGWRETSYQEASDLAALCEQEQIPFILDRPEATDPMDSRDIENAARRYRYELFYRLCKEKCFSGVFLGHHADDQAETILKRVFEGAHLGNLKGMSAQVMYRDVALLRPLLHIPKHKIVEALDSHQVQYVQDITNCNERFLRARMRERLFPYLQDVFGKNIRDPLLSLAGDSAELREYLDQQTAPFLLRVVDNERGKLLPIEQELLKTPFLAKWVCKQFFLNEGLVASKSFLQTVYDHLMTGSTARLRLRNRTVLVKARGVIIESIY</sequence>
<protein>
    <recommendedName>
        <fullName evidence="1">tRNA(Ile)-lysidine synthase</fullName>
        <ecNumber evidence="1">6.3.4.19</ecNumber>
    </recommendedName>
    <alternativeName>
        <fullName evidence="1">tRNA(Ile)-2-lysyl-cytidine synthase</fullName>
    </alternativeName>
    <alternativeName>
        <fullName evidence="1">tRNA(Ile)-lysidine synthetase</fullName>
    </alternativeName>
</protein>
<evidence type="ECO:0000255" key="1">
    <source>
        <dbReference type="HAMAP-Rule" id="MF_01161"/>
    </source>
</evidence>
<accession>B0BAU8</accession>
<proteinExistence type="inferred from homology"/>
<organism>
    <name type="scientific">Chlamydia trachomatis serovar L2b (strain UCH-1/proctitis)</name>
    <dbReference type="NCBI Taxonomy" id="471473"/>
    <lineage>
        <taxon>Bacteria</taxon>
        <taxon>Pseudomonadati</taxon>
        <taxon>Chlamydiota</taxon>
        <taxon>Chlamydiia</taxon>
        <taxon>Chlamydiales</taxon>
        <taxon>Chlamydiaceae</taxon>
        <taxon>Chlamydia/Chlamydophila group</taxon>
        <taxon>Chlamydia</taxon>
    </lineage>
</organism>
<name>TILS_CHLTB</name>
<reference key="1">
    <citation type="journal article" date="2008" name="Genome Res.">
        <title>Chlamydia trachomatis: genome sequence analysis of lymphogranuloma venereum isolates.</title>
        <authorList>
            <person name="Thomson N.R."/>
            <person name="Holden M.T.G."/>
            <person name="Carder C."/>
            <person name="Lennard N."/>
            <person name="Lockey S.J."/>
            <person name="Marsh P."/>
            <person name="Skipp P."/>
            <person name="O'Connor C.D."/>
            <person name="Goodhead I."/>
            <person name="Norbertzcak H."/>
            <person name="Harris B."/>
            <person name="Ormond D."/>
            <person name="Rance R."/>
            <person name="Quail M.A."/>
            <person name="Parkhill J."/>
            <person name="Stephens R.S."/>
            <person name="Clarke I.N."/>
        </authorList>
    </citation>
    <scope>NUCLEOTIDE SEQUENCE [LARGE SCALE GENOMIC DNA]</scope>
    <source>
        <strain>UCH-1/proctitis</strain>
    </source>
</reference>
<feature type="chain" id="PRO_1000213709" description="tRNA(Ile)-lysidine synthase">
    <location>
        <begin position="1"/>
        <end position="321"/>
    </location>
</feature>
<feature type="binding site" evidence="1">
    <location>
        <begin position="30"/>
        <end position="35"/>
    </location>
    <ligand>
        <name>ATP</name>
        <dbReference type="ChEBI" id="CHEBI:30616"/>
    </ligand>
</feature>
<gene>
    <name evidence="1" type="primary">tilS</name>
    <name type="ordered locus">CTLon_0212</name>
</gene>